<dbReference type="EC" id="7.2.2.11" evidence="1"/>
<dbReference type="EMBL" id="CP000243">
    <property type="protein sequence ID" value="ABE09425.1"/>
    <property type="molecule type" value="Genomic_DNA"/>
</dbReference>
<dbReference type="RefSeq" id="WP_001136232.1">
    <property type="nucleotide sequence ID" value="NZ_CP064825.1"/>
</dbReference>
<dbReference type="SMR" id="Q1R5D9"/>
<dbReference type="KEGG" id="eci:UTI89_C3996"/>
<dbReference type="HOGENOM" id="CLU_000604_1_23_6"/>
<dbReference type="Proteomes" id="UP000001952">
    <property type="component" value="Chromosome"/>
</dbReference>
<dbReference type="GO" id="GO:0005886">
    <property type="term" value="C:plasma membrane"/>
    <property type="evidence" value="ECO:0007669"/>
    <property type="project" value="UniProtKB-SubCell"/>
</dbReference>
<dbReference type="GO" id="GO:0015413">
    <property type="term" value="F:ABC-type nickel transporter activity"/>
    <property type="evidence" value="ECO:0007669"/>
    <property type="project" value="UniProtKB-EC"/>
</dbReference>
<dbReference type="GO" id="GO:0005524">
    <property type="term" value="F:ATP binding"/>
    <property type="evidence" value="ECO:0007669"/>
    <property type="project" value="UniProtKB-KW"/>
</dbReference>
<dbReference type="GO" id="GO:0016887">
    <property type="term" value="F:ATP hydrolysis activity"/>
    <property type="evidence" value="ECO:0007669"/>
    <property type="project" value="InterPro"/>
</dbReference>
<dbReference type="GO" id="GO:0016151">
    <property type="term" value="F:nickel cation binding"/>
    <property type="evidence" value="ECO:0007669"/>
    <property type="project" value="InterPro"/>
</dbReference>
<dbReference type="CDD" id="cd03257">
    <property type="entry name" value="ABC_NikE_OppD_transporters"/>
    <property type="match status" value="1"/>
</dbReference>
<dbReference type="FunFam" id="3.40.50.300:FF:000858">
    <property type="entry name" value="Nickel import ATP-binding protein NikD"/>
    <property type="match status" value="1"/>
</dbReference>
<dbReference type="Gene3D" id="3.40.50.300">
    <property type="entry name" value="P-loop containing nucleotide triphosphate hydrolases"/>
    <property type="match status" value="1"/>
</dbReference>
<dbReference type="InterPro" id="IPR003593">
    <property type="entry name" value="AAA+_ATPase"/>
</dbReference>
<dbReference type="InterPro" id="IPR050388">
    <property type="entry name" value="ABC_Ni/Peptide_Import"/>
</dbReference>
<dbReference type="InterPro" id="IPR003439">
    <property type="entry name" value="ABC_transporter-like_ATP-bd"/>
</dbReference>
<dbReference type="InterPro" id="IPR017871">
    <property type="entry name" value="ABC_transporter-like_CS"/>
</dbReference>
<dbReference type="InterPro" id="IPR014138">
    <property type="entry name" value="Nickel_NikD"/>
</dbReference>
<dbReference type="InterPro" id="IPR027417">
    <property type="entry name" value="P-loop_NTPase"/>
</dbReference>
<dbReference type="NCBIfam" id="TIGR02770">
    <property type="entry name" value="nickel_nikD"/>
    <property type="match status" value="1"/>
</dbReference>
<dbReference type="PANTHER" id="PTHR43297:SF2">
    <property type="entry name" value="DIPEPTIDE TRANSPORT ATP-BINDING PROTEIN DPPD"/>
    <property type="match status" value="1"/>
</dbReference>
<dbReference type="PANTHER" id="PTHR43297">
    <property type="entry name" value="OLIGOPEPTIDE TRANSPORT ATP-BINDING PROTEIN APPD"/>
    <property type="match status" value="1"/>
</dbReference>
<dbReference type="Pfam" id="PF00005">
    <property type="entry name" value="ABC_tran"/>
    <property type="match status" value="1"/>
</dbReference>
<dbReference type="SMART" id="SM00382">
    <property type="entry name" value="AAA"/>
    <property type="match status" value="1"/>
</dbReference>
<dbReference type="SUPFAM" id="SSF52540">
    <property type="entry name" value="P-loop containing nucleoside triphosphate hydrolases"/>
    <property type="match status" value="1"/>
</dbReference>
<dbReference type="PROSITE" id="PS00211">
    <property type="entry name" value="ABC_TRANSPORTER_1"/>
    <property type="match status" value="1"/>
</dbReference>
<dbReference type="PROSITE" id="PS50893">
    <property type="entry name" value="ABC_TRANSPORTER_2"/>
    <property type="match status" value="1"/>
</dbReference>
<dbReference type="PROSITE" id="PS51247">
    <property type="entry name" value="NIKD"/>
    <property type="match status" value="1"/>
</dbReference>
<gene>
    <name evidence="1" type="primary">nikD</name>
    <name type="ordered locus">UTI89_C3996</name>
</gene>
<reference key="1">
    <citation type="journal article" date="2006" name="Proc. Natl. Acad. Sci. U.S.A.">
        <title>Identification of genes subject to positive selection in uropathogenic strains of Escherichia coli: a comparative genomics approach.</title>
        <authorList>
            <person name="Chen S.L."/>
            <person name="Hung C.-S."/>
            <person name="Xu J."/>
            <person name="Reigstad C.S."/>
            <person name="Magrini V."/>
            <person name="Sabo A."/>
            <person name="Blasiar D."/>
            <person name="Bieri T."/>
            <person name="Meyer R.R."/>
            <person name="Ozersky P."/>
            <person name="Armstrong J.R."/>
            <person name="Fulton R.S."/>
            <person name="Latreille J.P."/>
            <person name="Spieth J."/>
            <person name="Hooton T.M."/>
            <person name="Mardis E.R."/>
            <person name="Hultgren S.J."/>
            <person name="Gordon J.I."/>
        </authorList>
    </citation>
    <scope>NUCLEOTIDE SEQUENCE [LARGE SCALE GENOMIC DNA]</scope>
    <source>
        <strain>UTI89 / UPEC</strain>
    </source>
</reference>
<feature type="chain" id="PRO_0000274113" description="Nickel import ATP-binding protein NikD">
    <location>
        <begin position="1"/>
        <end position="254"/>
    </location>
</feature>
<feature type="domain" description="ABC transporter" evidence="1">
    <location>
        <begin position="2"/>
        <end position="241"/>
    </location>
</feature>
<feature type="binding site" evidence="1">
    <location>
        <begin position="36"/>
        <end position="43"/>
    </location>
    <ligand>
        <name>ATP</name>
        <dbReference type="ChEBI" id="CHEBI:30616"/>
    </ligand>
</feature>
<comment type="function">
    <text evidence="1">Part of the ABC transporter complex NikABCDE involved in nickel import. Responsible for energy coupling to the transport system.</text>
</comment>
<comment type="catalytic activity">
    <reaction evidence="1">
        <text>Ni(2+)(out) + ATP + H2O = Ni(2+)(in) + ADP + phosphate + H(+)</text>
        <dbReference type="Rhea" id="RHEA:15557"/>
        <dbReference type="ChEBI" id="CHEBI:15377"/>
        <dbReference type="ChEBI" id="CHEBI:15378"/>
        <dbReference type="ChEBI" id="CHEBI:30616"/>
        <dbReference type="ChEBI" id="CHEBI:43474"/>
        <dbReference type="ChEBI" id="CHEBI:49786"/>
        <dbReference type="ChEBI" id="CHEBI:456216"/>
        <dbReference type="EC" id="7.2.2.11"/>
    </reaction>
</comment>
<comment type="subunit">
    <text evidence="1">The complex is composed of two ATP-binding proteins (NikD and NikE), two transmembrane proteins (NikB and NikC) and a solute-binding protein (NikA).</text>
</comment>
<comment type="subcellular location">
    <subcellularLocation>
        <location evidence="1">Cell inner membrane</location>
        <topology evidence="1">Peripheral membrane protein</topology>
    </subcellularLocation>
</comment>
<comment type="similarity">
    <text evidence="1">Belongs to the ABC transporter superfamily. Nickel importer (TC 3.A.1.5.3) family.</text>
</comment>
<accession>Q1R5D9</accession>
<name>NIKD_ECOUT</name>
<proteinExistence type="inferred from homology"/>
<keyword id="KW-0067">ATP-binding</keyword>
<keyword id="KW-0997">Cell inner membrane</keyword>
<keyword id="KW-1003">Cell membrane</keyword>
<keyword id="KW-0406">Ion transport</keyword>
<keyword id="KW-0472">Membrane</keyword>
<keyword id="KW-0533">Nickel</keyword>
<keyword id="KW-0921">Nickel transport</keyword>
<keyword id="KW-0547">Nucleotide-binding</keyword>
<keyword id="KW-1278">Translocase</keyword>
<keyword id="KW-0813">Transport</keyword>
<organism>
    <name type="scientific">Escherichia coli (strain UTI89 / UPEC)</name>
    <dbReference type="NCBI Taxonomy" id="364106"/>
    <lineage>
        <taxon>Bacteria</taxon>
        <taxon>Pseudomonadati</taxon>
        <taxon>Pseudomonadota</taxon>
        <taxon>Gammaproteobacteria</taxon>
        <taxon>Enterobacterales</taxon>
        <taxon>Enterobacteriaceae</taxon>
        <taxon>Escherichia</taxon>
    </lineage>
</organism>
<evidence type="ECO:0000255" key="1">
    <source>
        <dbReference type="HAMAP-Rule" id="MF_01711"/>
    </source>
</evidence>
<sequence length="254" mass="26812">MPQQIELRNIALQAAQPLVHGVSLTLQRGRVLALVGGSGSGKSLTCAATLGILPAGVRQTAGEILADGKPVSPCALRGIKIATIMQNPRSAFNPLHTMHTHARETCLALGKPADDATLTAAIEAVGLENAARVLKLYPFEMSGGMLQRMMIAMAVLCESPFIIADEPTTDLDVVAQARILDLLESIMQKQAPGMLLVTHDMGVVARLADDVAVMSHGKIVEQGDVETLFNAPKHAVTRSLVSAHLALYGMELAS</sequence>
<protein>
    <recommendedName>
        <fullName evidence="1">Nickel import ATP-binding protein NikD</fullName>
        <ecNumber evidence="1">7.2.2.11</ecNumber>
    </recommendedName>
</protein>